<protein>
    <recommendedName>
        <fullName>Uncharacterized protein YiiQ</fullName>
    </recommendedName>
</protein>
<accession>P32160</accession>
<accession>Q2M8L6</accession>
<reference key="1">
    <citation type="journal article" date="1993" name="Nucleic Acids Res.">
        <title>Analysis of the Escherichia coli genome. III. DNA sequence of the region from 87.2 to 89.2 minutes.</title>
        <authorList>
            <person name="Plunkett G. III"/>
            <person name="Burland V."/>
            <person name="Daniels D.L."/>
            <person name="Blattner F.R."/>
        </authorList>
    </citation>
    <scope>NUCLEOTIDE SEQUENCE [LARGE SCALE GENOMIC DNA]</scope>
    <source>
        <strain>K12 / MG1655 / ATCC 47076</strain>
    </source>
</reference>
<reference key="2">
    <citation type="journal article" date="1997" name="Science">
        <title>The complete genome sequence of Escherichia coli K-12.</title>
        <authorList>
            <person name="Blattner F.R."/>
            <person name="Plunkett G. III"/>
            <person name="Bloch C.A."/>
            <person name="Perna N.T."/>
            <person name="Burland V."/>
            <person name="Riley M."/>
            <person name="Collado-Vides J."/>
            <person name="Glasner J.D."/>
            <person name="Rode C.K."/>
            <person name="Mayhew G.F."/>
            <person name="Gregor J."/>
            <person name="Davis N.W."/>
            <person name="Kirkpatrick H.A."/>
            <person name="Goeden M.A."/>
            <person name="Rose D.J."/>
            <person name="Mau B."/>
            <person name="Shao Y."/>
        </authorList>
    </citation>
    <scope>NUCLEOTIDE SEQUENCE [LARGE SCALE GENOMIC DNA]</scope>
    <source>
        <strain>K12 / MG1655 / ATCC 47076</strain>
    </source>
</reference>
<reference key="3">
    <citation type="journal article" date="2006" name="Mol. Syst. Biol.">
        <title>Highly accurate genome sequences of Escherichia coli K-12 strains MG1655 and W3110.</title>
        <authorList>
            <person name="Hayashi K."/>
            <person name="Morooka N."/>
            <person name="Yamamoto Y."/>
            <person name="Fujita K."/>
            <person name="Isono K."/>
            <person name="Choi S."/>
            <person name="Ohtsubo E."/>
            <person name="Baba T."/>
            <person name="Wanner B.L."/>
            <person name="Mori H."/>
            <person name="Horiuchi T."/>
        </authorList>
    </citation>
    <scope>NUCLEOTIDE SEQUENCE [LARGE SCALE GENOMIC DNA]</scope>
    <source>
        <strain>K12 / W3110 / ATCC 27325 / DSM 5911</strain>
    </source>
</reference>
<sequence length="199" mass="21763">MKPGCTLFFLLCSALTVTTEAHAQTPDTATTAPYLLAGAPTFDLSISQFREDFNSQNPSLPLNEFRAIDSSPDKANLTRAASKINENLYASTALERGTLKIKSIQMTWLPIQGPEQKAAKAKAQEYMAAVIRTLTPLMTKTQSQKKLQSLLTAGKNKRYYTETEGALRYVVADNGEKGLTFAVEPIKLALSESLEGLNK</sequence>
<organism>
    <name type="scientific">Escherichia coli (strain K12)</name>
    <dbReference type="NCBI Taxonomy" id="83333"/>
    <lineage>
        <taxon>Bacteria</taxon>
        <taxon>Pseudomonadati</taxon>
        <taxon>Pseudomonadota</taxon>
        <taxon>Gammaproteobacteria</taxon>
        <taxon>Enterobacterales</taxon>
        <taxon>Enterobacteriaceae</taxon>
        <taxon>Escherichia</taxon>
    </lineage>
</organism>
<proteinExistence type="inferred from homology"/>
<name>YIIQ_ECOLI</name>
<dbReference type="EMBL" id="L19201">
    <property type="protein sequence ID" value="AAB03052.1"/>
    <property type="molecule type" value="Genomic_DNA"/>
</dbReference>
<dbReference type="EMBL" id="U00096">
    <property type="protein sequence ID" value="AAC76902.1"/>
    <property type="molecule type" value="Genomic_DNA"/>
</dbReference>
<dbReference type="EMBL" id="AP009048">
    <property type="protein sequence ID" value="BAE77390.1"/>
    <property type="molecule type" value="Genomic_DNA"/>
</dbReference>
<dbReference type="PIR" id="S40863">
    <property type="entry name" value="S40863"/>
</dbReference>
<dbReference type="RefSeq" id="NP_418355.1">
    <property type="nucleotide sequence ID" value="NC_000913.3"/>
</dbReference>
<dbReference type="RefSeq" id="WP_000802216.1">
    <property type="nucleotide sequence ID" value="NZ_LN832404.1"/>
</dbReference>
<dbReference type="BioGRID" id="4263447">
    <property type="interactions" value="13"/>
</dbReference>
<dbReference type="FunCoup" id="P32160">
    <property type="interactions" value="39"/>
</dbReference>
<dbReference type="IntAct" id="P32160">
    <property type="interactions" value="5"/>
</dbReference>
<dbReference type="STRING" id="511145.b3920"/>
<dbReference type="jPOST" id="P32160"/>
<dbReference type="PaxDb" id="511145-b3920"/>
<dbReference type="EnsemblBacteria" id="AAC76902">
    <property type="protein sequence ID" value="AAC76902"/>
    <property type="gene ID" value="b3920"/>
</dbReference>
<dbReference type="GeneID" id="948408"/>
<dbReference type="KEGG" id="ecj:JW3891"/>
<dbReference type="KEGG" id="eco:b3920"/>
<dbReference type="KEGG" id="ecoc:C3026_21190"/>
<dbReference type="PATRIC" id="fig|511145.12.peg.4037"/>
<dbReference type="EchoBASE" id="EB1820"/>
<dbReference type="eggNOG" id="ENOG502Z94B">
    <property type="taxonomic scope" value="Bacteria"/>
</dbReference>
<dbReference type="HOGENOM" id="CLU_103682_0_0_6"/>
<dbReference type="InParanoid" id="P32160"/>
<dbReference type="OMA" id="GQFREKY"/>
<dbReference type="OrthoDB" id="6503911at2"/>
<dbReference type="PhylomeDB" id="P32160"/>
<dbReference type="BioCyc" id="EcoCyc:EG11874-MONOMER"/>
<dbReference type="PRO" id="PR:P32160"/>
<dbReference type="Proteomes" id="UP000000625">
    <property type="component" value="Chromosome"/>
</dbReference>
<dbReference type="InterPro" id="IPR009918">
    <property type="entry name" value="DUF1454"/>
</dbReference>
<dbReference type="Pfam" id="PF07305">
    <property type="entry name" value="DUF1454"/>
    <property type="match status" value="1"/>
</dbReference>
<feature type="signal peptide" evidence="1">
    <location>
        <begin position="1"/>
        <end position="23"/>
    </location>
</feature>
<feature type="chain" id="PRO_0000013934" description="Uncharacterized protein YiiQ">
    <location>
        <begin position="24"/>
        <end position="199"/>
    </location>
</feature>
<keyword id="KW-1185">Reference proteome</keyword>
<keyword id="KW-0732">Signal</keyword>
<gene>
    <name type="primary">yiiQ</name>
    <name type="ordered locus">b3920</name>
    <name type="ordered locus">JW3891</name>
</gene>
<evidence type="ECO:0000255" key="1"/>